<gene>
    <name type="primary">FRMD6</name>
    <name type="synonym">C14orf31</name>
</gene>
<dbReference type="EMBL" id="AK055545">
    <property type="protein sequence ID" value="BAB70950.1"/>
    <property type="molecule type" value="mRNA"/>
</dbReference>
<dbReference type="EMBL" id="BX161430">
    <property type="protein sequence ID" value="CAD61902.1"/>
    <property type="molecule type" value="mRNA"/>
</dbReference>
<dbReference type="EMBL" id="BX647863">
    <property type="protein sequence ID" value="CAI46062.1"/>
    <property type="molecule type" value="mRNA"/>
</dbReference>
<dbReference type="EMBL" id="AL079307">
    <property type="status" value="NOT_ANNOTATED_CDS"/>
    <property type="molecule type" value="Genomic_DNA"/>
</dbReference>
<dbReference type="EMBL" id="CH471078">
    <property type="protein sequence ID" value="EAW65666.1"/>
    <property type="molecule type" value="Genomic_DNA"/>
</dbReference>
<dbReference type="EMBL" id="CH471078">
    <property type="protein sequence ID" value="EAW65671.1"/>
    <property type="molecule type" value="Genomic_DNA"/>
</dbReference>
<dbReference type="EMBL" id="BC020521">
    <property type="protein sequence ID" value="AAH20521.1"/>
    <property type="molecule type" value="mRNA"/>
</dbReference>
<dbReference type="EMBL" id="BC029870">
    <property type="protein sequence ID" value="AAH29870.1"/>
    <property type="molecule type" value="mRNA"/>
</dbReference>
<dbReference type="CCDS" id="CCDS58318.1">
    <molecule id="Q96NE9-1"/>
</dbReference>
<dbReference type="CCDS" id="CCDS58319.1">
    <molecule id="Q96NE9-3"/>
</dbReference>
<dbReference type="CCDS" id="CCDS9704.1">
    <molecule id="Q96NE9-2"/>
</dbReference>
<dbReference type="RefSeq" id="NP_001035946.1">
    <molecule id="Q96NE9-2"/>
    <property type="nucleotide sequence ID" value="NM_001042481.3"/>
</dbReference>
<dbReference type="RefSeq" id="NP_001253975.1">
    <molecule id="Q96NE9-1"/>
    <property type="nucleotide sequence ID" value="NM_001267046.2"/>
</dbReference>
<dbReference type="RefSeq" id="NP_001253976.1">
    <molecule id="Q96NE9-3"/>
    <property type="nucleotide sequence ID" value="NM_001267047.1"/>
</dbReference>
<dbReference type="RefSeq" id="NP_689543.1">
    <molecule id="Q96NE9-2"/>
    <property type="nucleotide sequence ID" value="NM_152330.4"/>
</dbReference>
<dbReference type="RefSeq" id="XP_006720092.1">
    <molecule id="Q96NE9-1"/>
    <property type="nucleotide sequence ID" value="XM_006720029.2"/>
</dbReference>
<dbReference type="RefSeq" id="XP_006720093.1">
    <molecule id="Q96NE9-2"/>
    <property type="nucleotide sequence ID" value="XM_006720030.2"/>
</dbReference>
<dbReference type="RefSeq" id="XP_011534725.1">
    <property type="nucleotide sequence ID" value="XM_011536423.1"/>
</dbReference>
<dbReference type="RefSeq" id="XP_011534726.1">
    <molecule id="Q96NE9-1"/>
    <property type="nucleotide sequence ID" value="XM_011536424.2"/>
</dbReference>
<dbReference type="RefSeq" id="XP_024305241.1">
    <molecule id="Q96NE9-1"/>
    <property type="nucleotide sequence ID" value="XM_024449473.2"/>
</dbReference>
<dbReference type="RefSeq" id="XP_024305242.1">
    <molecule id="Q96NE9-1"/>
    <property type="nucleotide sequence ID" value="XM_024449474.2"/>
</dbReference>
<dbReference type="RefSeq" id="XP_024305243.1">
    <molecule id="Q96NE9-1"/>
    <property type="nucleotide sequence ID" value="XM_024449475.2"/>
</dbReference>
<dbReference type="RefSeq" id="XP_024305244.1">
    <molecule id="Q96NE9-2"/>
    <property type="nucleotide sequence ID" value="XM_024449476.2"/>
</dbReference>
<dbReference type="RefSeq" id="XP_047286876.1">
    <molecule id="Q96NE9-1"/>
    <property type="nucleotide sequence ID" value="XM_047430920.1"/>
</dbReference>
<dbReference type="RefSeq" id="XP_047286877.1">
    <molecule id="Q96NE9-1"/>
    <property type="nucleotide sequence ID" value="XM_047430921.1"/>
</dbReference>
<dbReference type="RefSeq" id="XP_047286878.1">
    <molecule id="Q96NE9-1"/>
    <property type="nucleotide sequence ID" value="XM_047430922.1"/>
</dbReference>
<dbReference type="RefSeq" id="XP_047286879.1">
    <molecule id="Q96NE9-1"/>
    <property type="nucleotide sequence ID" value="XM_047430923.1"/>
</dbReference>
<dbReference type="RefSeq" id="XP_047286881.1">
    <molecule id="Q96NE9-1"/>
    <property type="nucleotide sequence ID" value="XM_047430925.1"/>
</dbReference>
<dbReference type="RefSeq" id="XP_047286882.1">
    <molecule id="Q96NE9-1"/>
    <property type="nucleotide sequence ID" value="XM_047430926.1"/>
</dbReference>
<dbReference type="RefSeq" id="XP_047286883.1">
    <molecule id="Q96NE9-1"/>
    <property type="nucleotide sequence ID" value="XM_047430927.1"/>
</dbReference>
<dbReference type="RefSeq" id="XP_047286884.1">
    <molecule id="Q96NE9-1"/>
    <property type="nucleotide sequence ID" value="XM_047430928.1"/>
</dbReference>
<dbReference type="RefSeq" id="XP_047286885.1">
    <molecule id="Q96NE9-2"/>
    <property type="nucleotide sequence ID" value="XM_047430929.1"/>
</dbReference>
<dbReference type="RefSeq" id="XP_047286886.1">
    <molecule id="Q96NE9-2"/>
    <property type="nucleotide sequence ID" value="XM_047430930.1"/>
</dbReference>
<dbReference type="RefSeq" id="XP_047286887.1">
    <molecule id="Q96NE9-2"/>
    <property type="nucleotide sequence ID" value="XM_047430931.1"/>
</dbReference>
<dbReference type="RefSeq" id="XP_047286888.1">
    <molecule id="Q96NE9-2"/>
    <property type="nucleotide sequence ID" value="XM_047430932.1"/>
</dbReference>
<dbReference type="RefSeq" id="XP_047286889.1">
    <molecule id="Q96NE9-2"/>
    <property type="nucleotide sequence ID" value="XM_047430933.1"/>
</dbReference>
<dbReference type="RefSeq" id="XP_047286890.1">
    <molecule id="Q96NE9-2"/>
    <property type="nucleotide sequence ID" value="XM_047430934.1"/>
</dbReference>
<dbReference type="RefSeq" id="XP_047286891.1">
    <molecule id="Q96NE9-2"/>
    <property type="nucleotide sequence ID" value="XM_047430935.1"/>
</dbReference>
<dbReference type="RefSeq" id="XP_054231338.1">
    <molecule id="Q96NE9-1"/>
    <property type="nucleotide sequence ID" value="XM_054375363.1"/>
</dbReference>
<dbReference type="RefSeq" id="XP_054231339.1">
    <molecule id="Q96NE9-1"/>
    <property type="nucleotide sequence ID" value="XM_054375364.1"/>
</dbReference>
<dbReference type="RefSeq" id="XP_054231340.1">
    <molecule id="Q96NE9-1"/>
    <property type="nucleotide sequence ID" value="XM_054375365.1"/>
</dbReference>
<dbReference type="RefSeq" id="XP_054231341.1">
    <molecule id="Q96NE9-1"/>
    <property type="nucleotide sequence ID" value="XM_054375366.1"/>
</dbReference>
<dbReference type="RefSeq" id="XP_054231342.1">
    <molecule id="Q96NE9-1"/>
    <property type="nucleotide sequence ID" value="XM_054375367.1"/>
</dbReference>
<dbReference type="RefSeq" id="XP_054231343.1">
    <molecule id="Q96NE9-1"/>
    <property type="nucleotide sequence ID" value="XM_054375368.1"/>
</dbReference>
<dbReference type="RefSeq" id="XP_054231344.1">
    <molecule id="Q96NE9-1"/>
    <property type="nucleotide sequence ID" value="XM_054375369.1"/>
</dbReference>
<dbReference type="RefSeq" id="XP_054231345.1">
    <molecule id="Q96NE9-1"/>
    <property type="nucleotide sequence ID" value="XM_054375370.1"/>
</dbReference>
<dbReference type="RefSeq" id="XP_054231346.1">
    <molecule id="Q96NE9-1"/>
    <property type="nucleotide sequence ID" value="XM_054375371.1"/>
</dbReference>
<dbReference type="RefSeq" id="XP_054231347.1">
    <molecule id="Q96NE9-1"/>
    <property type="nucleotide sequence ID" value="XM_054375372.1"/>
</dbReference>
<dbReference type="RefSeq" id="XP_054231348.1">
    <molecule id="Q96NE9-1"/>
    <property type="nucleotide sequence ID" value="XM_054375373.1"/>
</dbReference>
<dbReference type="RefSeq" id="XP_054231349.1">
    <molecule id="Q96NE9-1"/>
    <property type="nucleotide sequence ID" value="XM_054375374.1"/>
</dbReference>
<dbReference type="RefSeq" id="XP_054231350.1">
    <molecule id="Q96NE9-1"/>
    <property type="nucleotide sequence ID" value="XM_054375375.1"/>
</dbReference>
<dbReference type="RefSeq" id="XP_054231351.1">
    <molecule id="Q96NE9-1"/>
    <property type="nucleotide sequence ID" value="XM_054375376.1"/>
</dbReference>
<dbReference type="RefSeq" id="XP_054231352.1">
    <molecule id="Q96NE9-2"/>
    <property type="nucleotide sequence ID" value="XM_054375377.1"/>
</dbReference>
<dbReference type="RefSeq" id="XP_054231353.1">
    <molecule id="Q96NE9-2"/>
    <property type="nucleotide sequence ID" value="XM_054375378.1"/>
</dbReference>
<dbReference type="RefSeq" id="XP_054231354.1">
    <molecule id="Q96NE9-2"/>
    <property type="nucleotide sequence ID" value="XM_054375379.1"/>
</dbReference>
<dbReference type="RefSeq" id="XP_054231355.1">
    <molecule id="Q96NE9-2"/>
    <property type="nucleotide sequence ID" value="XM_054375380.1"/>
</dbReference>
<dbReference type="RefSeq" id="XP_054231356.1">
    <molecule id="Q96NE9-2"/>
    <property type="nucleotide sequence ID" value="XM_054375381.1"/>
</dbReference>
<dbReference type="RefSeq" id="XP_054231357.1">
    <molecule id="Q96NE9-2"/>
    <property type="nucleotide sequence ID" value="XM_054375382.1"/>
</dbReference>
<dbReference type="RefSeq" id="XP_054231358.1">
    <molecule id="Q96NE9-2"/>
    <property type="nucleotide sequence ID" value="XM_054375383.1"/>
</dbReference>
<dbReference type="RefSeq" id="XP_054231359.1">
    <molecule id="Q96NE9-2"/>
    <property type="nucleotide sequence ID" value="XM_054375384.1"/>
</dbReference>
<dbReference type="RefSeq" id="XP_054231360.1">
    <molecule id="Q96NE9-2"/>
    <property type="nucleotide sequence ID" value="XM_054375385.1"/>
</dbReference>
<dbReference type="SMR" id="Q96NE9"/>
<dbReference type="BioGRID" id="125795">
    <property type="interactions" value="56"/>
</dbReference>
<dbReference type="FunCoup" id="Q96NE9">
    <property type="interactions" value="868"/>
</dbReference>
<dbReference type="IntAct" id="Q96NE9">
    <property type="interactions" value="70"/>
</dbReference>
<dbReference type="MINT" id="Q96NE9"/>
<dbReference type="STRING" id="9606.ENSP00000343899"/>
<dbReference type="iPTMnet" id="Q96NE9"/>
<dbReference type="PhosphoSitePlus" id="Q96NE9"/>
<dbReference type="BioMuta" id="FRMD6"/>
<dbReference type="DMDM" id="34098678"/>
<dbReference type="jPOST" id="Q96NE9"/>
<dbReference type="MassIVE" id="Q96NE9"/>
<dbReference type="PaxDb" id="9606-ENSP00000343899"/>
<dbReference type="PeptideAtlas" id="Q96NE9"/>
<dbReference type="ProteomicsDB" id="77504">
    <molecule id="Q96NE9-1"/>
</dbReference>
<dbReference type="ProteomicsDB" id="77505">
    <molecule id="Q96NE9-2"/>
</dbReference>
<dbReference type="ProteomicsDB" id="77506">
    <molecule id="Q96NE9-3"/>
</dbReference>
<dbReference type="Pumba" id="Q96NE9"/>
<dbReference type="Antibodypedia" id="35">
    <property type="antibodies" value="99 antibodies from 25 providers"/>
</dbReference>
<dbReference type="DNASU" id="122786"/>
<dbReference type="Ensembl" id="ENST00000344768.10">
    <molecule id="Q96NE9-1"/>
    <property type="protein sequence ID" value="ENSP00000343899.6"/>
    <property type="gene ID" value="ENSG00000139926.16"/>
</dbReference>
<dbReference type="Ensembl" id="ENST00000356218.8">
    <molecule id="Q96NE9-2"/>
    <property type="protein sequence ID" value="ENSP00000348550.4"/>
    <property type="gene ID" value="ENSG00000139926.16"/>
</dbReference>
<dbReference type="Ensembl" id="ENST00000395718.6">
    <molecule id="Q96NE9-2"/>
    <property type="protein sequence ID" value="ENSP00000379068.2"/>
    <property type="gene ID" value="ENSG00000139926.16"/>
</dbReference>
<dbReference type="Ensembl" id="ENST00000553556.2">
    <molecule id="Q96NE9-3"/>
    <property type="protein sequence ID" value="ENSP00000452529.1"/>
    <property type="gene ID" value="ENSG00000139926.16"/>
</dbReference>
<dbReference type="GeneID" id="122786"/>
<dbReference type="KEGG" id="hsa:122786"/>
<dbReference type="MANE-Select" id="ENST00000344768.10">
    <property type="protein sequence ID" value="ENSP00000343899.6"/>
    <property type="RefSeq nucleotide sequence ID" value="NM_001267046.2"/>
    <property type="RefSeq protein sequence ID" value="NP_001253975.1"/>
</dbReference>
<dbReference type="UCSC" id="uc001wzb.5">
    <molecule id="Q96NE9-1"/>
    <property type="organism name" value="human"/>
</dbReference>
<dbReference type="AGR" id="HGNC:19839"/>
<dbReference type="CTD" id="122786"/>
<dbReference type="DisGeNET" id="122786"/>
<dbReference type="GeneCards" id="FRMD6"/>
<dbReference type="HGNC" id="HGNC:19839">
    <property type="gene designation" value="FRMD6"/>
</dbReference>
<dbReference type="HPA" id="ENSG00000139926">
    <property type="expression patterns" value="Low tissue specificity"/>
</dbReference>
<dbReference type="MIM" id="614555">
    <property type="type" value="gene"/>
</dbReference>
<dbReference type="neXtProt" id="NX_Q96NE9"/>
<dbReference type="OpenTargets" id="ENSG00000139926"/>
<dbReference type="PharmGKB" id="PA134913028"/>
<dbReference type="VEuPathDB" id="HostDB:ENSG00000139926"/>
<dbReference type="eggNOG" id="KOG4371">
    <property type="taxonomic scope" value="Eukaryota"/>
</dbReference>
<dbReference type="GeneTree" id="ENSGT00940000155517"/>
<dbReference type="HOGENOM" id="CLU_036910_1_1_1"/>
<dbReference type="InParanoid" id="Q96NE9"/>
<dbReference type="OMA" id="QPILRHI"/>
<dbReference type="OrthoDB" id="5957665at2759"/>
<dbReference type="PAN-GO" id="Q96NE9">
    <property type="GO annotations" value="2 GO annotations based on evolutionary models"/>
</dbReference>
<dbReference type="PhylomeDB" id="Q96NE9"/>
<dbReference type="TreeFam" id="TF319780"/>
<dbReference type="PathwayCommons" id="Q96NE9"/>
<dbReference type="SignaLink" id="Q96NE9"/>
<dbReference type="BioGRID-ORCS" id="122786">
    <property type="hits" value="20 hits in 1158 CRISPR screens"/>
</dbReference>
<dbReference type="ChiTaRS" id="FRMD6">
    <property type="organism name" value="human"/>
</dbReference>
<dbReference type="GeneWiki" id="FRMD6"/>
<dbReference type="GenomeRNAi" id="122786"/>
<dbReference type="Pharos" id="Q96NE9">
    <property type="development level" value="Tbio"/>
</dbReference>
<dbReference type="PRO" id="PR:Q96NE9"/>
<dbReference type="Proteomes" id="UP000005640">
    <property type="component" value="Chromosome 14"/>
</dbReference>
<dbReference type="RNAct" id="Q96NE9">
    <property type="molecule type" value="protein"/>
</dbReference>
<dbReference type="Bgee" id="ENSG00000139926">
    <property type="expression patterns" value="Expressed in upper arm skin and 189 other cell types or tissues"/>
</dbReference>
<dbReference type="ExpressionAtlas" id="Q96NE9">
    <property type="expression patterns" value="baseline and differential"/>
</dbReference>
<dbReference type="GO" id="GO:0043296">
    <property type="term" value="C:apical junction complex"/>
    <property type="evidence" value="ECO:0007669"/>
    <property type="project" value="Ensembl"/>
</dbReference>
<dbReference type="GO" id="GO:0005737">
    <property type="term" value="C:cytoplasm"/>
    <property type="evidence" value="ECO:0000314"/>
    <property type="project" value="UniProtKB"/>
</dbReference>
<dbReference type="GO" id="GO:0098592">
    <property type="term" value="C:cytoplasmic side of apical plasma membrane"/>
    <property type="evidence" value="ECO:0000318"/>
    <property type="project" value="GO_Central"/>
</dbReference>
<dbReference type="GO" id="GO:0005856">
    <property type="term" value="C:cytoskeleton"/>
    <property type="evidence" value="ECO:0007669"/>
    <property type="project" value="InterPro"/>
</dbReference>
<dbReference type="GO" id="GO:0005886">
    <property type="term" value="C:plasma membrane"/>
    <property type="evidence" value="ECO:0000314"/>
    <property type="project" value="UniProtKB"/>
</dbReference>
<dbReference type="GO" id="GO:0003383">
    <property type="term" value="P:apical constriction"/>
    <property type="evidence" value="ECO:0007669"/>
    <property type="project" value="Ensembl"/>
</dbReference>
<dbReference type="GO" id="GO:0035332">
    <property type="term" value="P:positive regulation of hippo signaling"/>
    <property type="evidence" value="ECO:0000318"/>
    <property type="project" value="GO_Central"/>
</dbReference>
<dbReference type="GO" id="GO:0008104">
    <property type="term" value="P:protein localization"/>
    <property type="evidence" value="ECO:0007669"/>
    <property type="project" value="Ensembl"/>
</dbReference>
<dbReference type="GO" id="GO:0032970">
    <property type="term" value="P:regulation of actin filament-based process"/>
    <property type="evidence" value="ECO:0007669"/>
    <property type="project" value="Ensembl"/>
</dbReference>
<dbReference type="CDD" id="cd14473">
    <property type="entry name" value="FERM_B-lobe"/>
    <property type="match status" value="1"/>
</dbReference>
<dbReference type="CDD" id="cd13185">
    <property type="entry name" value="FERM_C_FRMD1_FRMD6"/>
    <property type="match status" value="1"/>
</dbReference>
<dbReference type="CDD" id="cd17198">
    <property type="entry name" value="FERM_F1_FRMD6"/>
    <property type="match status" value="1"/>
</dbReference>
<dbReference type="FunFam" id="1.20.80.10:FF:000015">
    <property type="entry name" value="FERM domain-containing protein 6 isoform X2"/>
    <property type="match status" value="1"/>
</dbReference>
<dbReference type="FunFam" id="2.30.29.30:FF:000134">
    <property type="entry name" value="Putative FERM domain-containing protein 6"/>
    <property type="match status" value="1"/>
</dbReference>
<dbReference type="FunFam" id="3.10.20.90:FF:000079">
    <property type="entry name" value="Putative FERM domain-containing protein 6"/>
    <property type="match status" value="1"/>
</dbReference>
<dbReference type="Gene3D" id="1.20.80.10">
    <property type="match status" value="1"/>
</dbReference>
<dbReference type="Gene3D" id="3.10.20.90">
    <property type="entry name" value="Phosphatidylinositol 3-kinase Catalytic Subunit, Chain A, domain 1"/>
    <property type="match status" value="1"/>
</dbReference>
<dbReference type="Gene3D" id="2.30.29.30">
    <property type="entry name" value="Pleckstrin-homology domain (PH domain)/Phosphotyrosine-binding domain (PTB)"/>
    <property type="match status" value="1"/>
</dbReference>
<dbReference type="InterPro" id="IPR019749">
    <property type="entry name" value="Band_41_domain"/>
</dbReference>
<dbReference type="InterPro" id="IPR014352">
    <property type="entry name" value="FERM/acyl-CoA-bd_prot_sf"/>
</dbReference>
<dbReference type="InterPro" id="IPR035963">
    <property type="entry name" value="FERM_2"/>
</dbReference>
<dbReference type="InterPro" id="IPR019748">
    <property type="entry name" value="FERM_central"/>
</dbReference>
<dbReference type="InterPro" id="IPR000299">
    <property type="entry name" value="FERM_domain"/>
</dbReference>
<dbReference type="InterPro" id="IPR018979">
    <property type="entry name" value="FERM_N"/>
</dbReference>
<dbReference type="InterPro" id="IPR018980">
    <property type="entry name" value="FERM_PH-like_C"/>
</dbReference>
<dbReference type="InterPro" id="IPR041781">
    <property type="entry name" value="FRMD6-FERM_C"/>
</dbReference>
<dbReference type="InterPro" id="IPR047145">
    <property type="entry name" value="FRMD6-like"/>
</dbReference>
<dbReference type="InterPro" id="IPR011993">
    <property type="entry name" value="PH-like_dom_sf"/>
</dbReference>
<dbReference type="InterPro" id="IPR029071">
    <property type="entry name" value="Ubiquitin-like_domsf"/>
</dbReference>
<dbReference type="PANTHER" id="PTHR13429">
    <property type="entry name" value="FERM DOMAIN (PROTEIN4.1-EZRIN-RADIXIN-MOESIN) FAMILY"/>
    <property type="match status" value="1"/>
</dbReference>
<dbReference type="PANTHER" id="PTHR13429:SF11">
    <property type="entry name" value="FERM DOMAIN-CONTAINING PROTEIN 6"/>
    <property type="match status" value="1"/>
</dbReference>
<dbReference type="Pfam" id="PF09380">
    <property type="entry name" value="FERM_C"/>
    <property type="match status" value="1"/>
</dbReference>
<dbReference type="Pfam" id="PF00373">
    <property type="entry name" value="FERM_M"/>
    <property type="match status" value="1"/>
</dbReference>
<dbReference type="Pfam" id="PF09379">
    <property type="entry name" value="FERM_N"/>
    <property type="match status" value="1"/>
</dbReference>
<dbReference type="SMART" id="SM00295">
    <property type="entry name" value="B41"/>
    <property type="match status" value="1"/>
</dbReference>
<dbReference type="SMART" id="SM01196">
    <property type="entry name" value="FERM_C"/>
    <property type="match status" value="1"/>
</dbReference>
<dbReference type="SUPFAM" id="SSF50729">
    <property type="entry name" value="PH domain-like"/>
    <property type="match status" value="1"/>
</dbReference>
<dbReference type="SUPFAM" id="SSF47031">
    <property type="entry name" value="Second domain of FERM"/>
    <property type="match status" value="1"/>
</dbReference>
<dbReference type="SUPFAM" id="SSF54236">
    <property type="entry name" value="Ubiquitin-like"/>
    <property type="match status" value="1"/>
</dbReference>
<dbReference type="PROSITE" id="PS50057">
    <property type="entry name" value="FERM_3"/>
    <property type="match status" value="1"/>
</dbReference>
<name>FRMD6_HUMAN</name>
<evidence type="ECO:0000250" key="1">
    <source>
        <dbReference type="UniProtKB" id="Q8C0V9"/>
    </source>
</evidence>
<evidence type="ECO:0000255" key="2">
    <source>
        <dbReference type="PROSITE-ProRule" id="PRU00084"/>
    </source>
</evidence>
<evidence type="ECO:0000256" key="3">
    <source>
        <dbReference type="SAM" id="MobiDB-lite"/>
    </source>
</evidence>
<evidence type="ECO:0000269" key="4">
    <source>
    </source>
</evidence>
<evidence type="ECO:0000303" key="5">
    <source>
    </source>
</evidence>
<evidence type="ECO:0000303" key="6">
    <source>
    </source>
</evidence>
<evidence type="ECO:0000303" key="7">
    <source ref="2"/>
</evidence>
<evidence type="ECO:0000305" key="8"/>
<evidence type="ECO:0007744" key="9">
    <source>
    </source>
</evidence>
<evidence type="ECO:0007744" key="10">
    <source>
    </source>
</evidence>
<evidence type="ECO:0007744" key="11">
    <source>
    </source>
</evidence>
<organism>
    <name type="scientific">Homo sapiens</name>
    <name type="common">Human</name>
    <dbReference type="NCBI Taxonomy" id="9606"/>
    <lineage>
        <taxon>Eukaryota</taxon>
        <taxon>Metazoa</taxon>
        <taxon>Chordata</taxon>
        <taxon>Craniata</taxon>
        <taxon>Vertebrata</taxon>
        <taxon>Euteleostomi</taxon>
        <taxon>Mammalia</taxon>
        <taxon>Eutheria</taxon>
        <taxon>Euarchontoglires</taxon>
        <taxon>Primates</taxon>
        <taxon>Haplorrhini</taxon>
        <taxon>Catarrhini</taxon>
        <taxon>Hominidae</taxon>
        <taxon>Homo</taxon>
    </lineage>
</organism>
<comment type="interaction">
    <interactant intactId="EBI-741729">
        <id>Q96NE9</id>
    </interactant>
    <interactant intactId="EBI-2548012">
        <id>Q9H2G9</id>
        <label>BLZF1</label>
    </interactant>
    <organismsDiffer>false</organismsDiffer>
    <experiments>3</experiments>
</comment>
<comment type="interaction">
    <interactant intactId="EBI-741729">
        <id>Q96NE9</id>
    </interactant>
    <interactant intactId="EBI-10291911">
        <id>Q6YFQ2</id>
        <label>COX6B2</label>
    </interactant>
    <organismsDiffer>false</organismsDiffer>
    <experiments>3</experiments>
</comment>
<comment type="interaction">
    <interactant intactId="EBI-741729">
        <id>Q96NE9</id>
    </interactant>
    <interactant intactId="EBI-3952284">
        <id>Q96EY1-2</id>
        <label>DNAJA3</label>
    </interactant>
    <organismsDiffer>false</organismsDiffer>
    <experiments>6</experiments>
</comment>
<comment type="interaction">
    <interactant intactId="EBI-741729">
        <id>Q96NE9</id>
    </interactant>
    <interactant intactId="EBI-949824">
        <id>O00471</id>
        <label>EXOC5</label>
    </interactant>
    <organismsDiffer>false</organismsDiffer>
    <experiments>3</experiments>
</comment>
<comment type="interaction">
    <interactant intactId="EBI-741729">
        <id>Q96NE9</id>
    </interactant>
    <interactant intactId="EBI-10172181">
        <id>Q53SE7</id>
        <label>FLJ13057</label>
    </interactant>
    <organismsDiffer>false</organismsDiffer>
    <experiments>3</experiments>
</comment>
<comment type="interaction">
    <interactant intactId="EBI-741729">
        <id>Q96NE9</id>
    </interactant>
    <interactant intactId="EBI-2549423">
        <id>Q6NT76</id>
        <label>HMBOX1</label>
    </interactant>
    <organismsDiffer>false</organismsDiffer>
    <experiments>3</experiments>
</comment>
<comment type="interaction">
    <interactant intactId="EBI-741729">
        <id>Q96NE9</id>
    </interactant>
    <interactant intactId="EBI-745305">
        <id>Q13422</id>
        <label>IKZF1</label>
    </interactant>
    <organismsDiffer>false</organismsDiffer>
    <experiments>3</experiments>
</comment>
<comment type="interaction">
    <interactant intactId="EBI-741729">
        <id>Q96NE9</id>
    </interactant>
    <interactant intactId="EBI-8464037">
        <id>Q6NYC1</id>
        <label>JMJD6</label>
    </interactant>
    <organismsDiffer>false</organismsDiffer>
    <experiments>3</experiments>
</comment>
<comment type="interaction">
    <interactant intactId="EBI-741729">
        <id>Q96NE9</id>
    </interactant>
    <interactant intactId="EBI-741037">
        <id>Q9BRK4</id>
        <label>LZTS2</label>
    </interactant>
    <organismsDiffer>false</organismsDiffer>
    <experiments>3</experiments>
</comment>
<comment type="interaction">
    <interactant intactId="EBI-741729">
        <id>Q96NE9</id>
    </interactant>
    <interactant intactId="EBI-394607">
        <id>Q9NPJ6</id>
        <label>MED4</label>
    </interactant>
    <organismsDiffer>false</organismsDiffer>
    <experiments>3</experiments>
</comment>
<comment type="interaction">
    <interactant intactId="EBI-741729">
        <id>Q96NE9</id>
    </interactant>
    <interactant intactId="EBI-10172526">
        <id>Q9UJV3-2</id>
        <label>MID2</label>
    </interactant>
    <organismsDiffer>false</organismsDiffer>
    <experiments>3</experiments>
</comment>
<comment type="interaction">
    <interactant intactId="EBI-741729">
        <id>Q96NE9</id>
    </interactant>
    <interactant intactId="EBI-744248">
        <id>P40692</id>
        <label>MLH1</label>
    </interactant>
    <organismsDiffer>false</organismsDiffer>
    <experiments>3</experiments>
</comment>
<comment type="interaction">
    <interactant intactId="EBI-741729">
        <id>Q96NE9</id>
    </interactant>
    <interactant intactId="EBI-306805">
        <id>Q8NHQ8</id>
        <label>RASSF8</label>
    </interactant>
    <organismsDiffer>false</organismsDiffer>
    <experiments>3</experiments>
</comment>
<comment type="interaction">
    <interactant intactId="EBI-741729">
        <id>Q96NE9</id>
    </interactant>
    <interactant intactId="EBI-2212028">
        <id>Q9Y2D8</id>
        <label>SSX2IP</label>
    </interactant>
    <organismsDiffer>false</organismsDiffer>
    <experiments>3</experiments>
</comment>
<comment type="interaction">
    <interactant intactId="EBI-741729">
        <id>Q96NE9</id>
    </interactant>
    <interactant intactId="EBI-10291832">
        <id>A2RRE0</id>
        <label>WDR7</label>
    </interactant>
    <organismsDiffer>false</organismsDiffer>
    <experiments>3</experiments>
</comment>
<comment type="interaction">
    <interactant intactId="EBI-13213391">
        <id>Q96NE9-2</id>
    </interactant>
    <interactant intactId="EBI-2371151">
        <id>Q9Y2T2</id>
        <label>AP3M1</label>
    </interactant>
    <organismsDiffer>false</organismsDiffer>
    <experiments>3</experiments>
</comment>
<comment type="interaction">
    <interactant intactId="EBI-13213391">
        <id>Q96NE9-2</id>
    </interactant>
    <interactant intactId="EBI-11522367">
        <id>Q13422-7</id>
        <label>IKZF1</label>
    </interactant>
    <organismsDiffer>false</organismsDiffer>
    <experiments>3</experiments>
</comment>
<comment type="interaction">
    <interactant intactId="EBI-13213391">
        <id>Q96NE9-2</id>
    </interactant>
    <interactant intactId="EBI-399080">
        <id>Q92993</id>
        <label>KAT5</label>
    </interactant>
    <organismsDiffer>false</organismsDiffer>
    <experiments>3</experiments>
</comment>
<comment type="interaction">
    <interactant intactId="EBI-13213391">
        <id>Q96NE9-2</id>
    </interactant>
    <interactant intactId="EBI-11742507">
        <id>Q8TAP4-4</id>
        <label>LMO3</label>
    </interactant>
    <organismsDiffer>false</organismsDiffer>
    <experiments>3</experiments>
</comment>
<comment type="interaction">
    <interactant intactId="EBI-13213391">
        <id>Q96NE9-2</id>
    </interactant>
    <interactant intactId="EBI-5280229">
        <id>Q9BXY0</id>
        <label>MAK16</label>
    </interactant>
    <organismsDiffer>false</organismsDiffer>
    <experiments>5</experiments>
</comment>
<comment type="interaction">
    <interactant intactId="EBI-13213391">
        <id>Q96NE9-2</id>
    </interactant>
    <interactant intactId="EBI-744248">
        <id>P40692</id>
        <label>MLH1</label>
    </interactant>
    <organismsDiffer>false</organismsDiffer>
    <experiments>4</experiments>
</comment>
<comment type="interaction">
    <interactant intactId="EBI-13213391">
        <id>Q96NE9-2</id>
    </interactant>
    <interactant intactId="EBI-3920396">
        <id>Q6ZUT1</id>
        <label>NKAPD1</label>
    </interactant>
    <organismsDiffer>false</organismsDiffer>
    <experiments>3</experiments>
</comment>
<comment type="interaction">
    <interactant intactId="EBI-13213391">
        <id>Q96NE9-2</id>
    </interactant>
    <interactant intactId="EBI-295391">
        <id>Q9BYG5</id>
        <label>PARD6B</label>
    </interactant>
    <organismsDiffer>false</organismsDiffer>
    <experiments>3</experiments>
</comment>
<comment type="interaction">
    <interactant intactId="EBI-13213391">
        <id>Q96NE9-2</id>
    </interactant>
    <interactant intactId="EBI-25884072">
        <id>P62937-2</id>
        <label>PPIA</label>
    </interactant>
    <organismsDiffer>false</organismsDiffer>
    <experiments>3</experiments>
</comment>
<comment type="interaction">
    <interactant intactId="EBI-13213391">
        <id>Q96NE9-2</id>
    </interactant>
    <interactant intactId="EBI-1383528">
        <id>P17252</id>
        <label>PRKCA</label>
    </interactant>
    <organismsDiffer>false</organismsDiffer>
    <experiments>3</experiments>
</comment>
<comment type="interaction">
    <interactant intactId="EBI-13213391">
        <id>Q96NE9-2</id>
    </interactant>
    <interactant intactId="EBI-9090795">
        <id>Q15047-2</id>
        <label>SETDB1</label>
    </interactant>
    <organismsDiffer>false</organismsDiffer>
    <experiments>3</experiments>
</comment>
<comment type="interaction">
    <interactant intactId="EBI-13213391">
        <id>Q96NE9-2</id>
    </interactant>
    <interactant intactId="EBI-745392">
        <id>Q9BSW7</id>
        <label>SYT17</label>
    </interactant>
    <organismsDiffer>false</organismsDiffer>
    <experiments>3</experiments>
</comment>
<comment type="interaction">
    <interactant intactId="EBI-13213391">
        <id>Q96NE9-2</id>
    </interactant>
    <interactant intactId="EBI-1047967">
        <id>Q86UE8</id>
        <label>TLK2</label>
    </interactant>
    <organismsDiffer>false</organismsDiffer>
    <experiments>3</experiments>
</comment>
<comment type="interaction">
    <interactant intactId="EBI-13213391">
        <id>Q96NE9-2</id>
    </interactant>
    <interactant intactId="EBI-359832">
        <id>P61981</id>
        <label>YWHAG</label>
    </interactant>
    <organismsDiffer>false</organismsDiffer>
    <experiments>3</experiments>
</comment>
<comment type="subcellular location">
    <subcellularLocation>
        <location evidence="4">Cytoplasm</location>
    </subcellularLocation>
    <subcellularLocation>
        <location evidence="4">Cell membrane</location>
        <topology evidence="4">Peripheral membrane protein</topology>
        <orientation evidence="4">Cytoplasmic side</orientation>
    </subcellularLocation>
    <text>Can colocalize with actin.</text>
</comment>
<comment type="alternative products">
    <event type="alternative splicing"/>
    <isoform>
        <id>Q96NE9-1</id>
        <name>1</name>
        <sequence type="displayed"/>
    </isoform>
    <isoform>
        <id>Q96NE9-2</id>
        <name>2</name>
        <sequence type="described" ref="VSP_008023"/>
    </isoform>
    <isoform>
        <id>Q96NE9-3</id>
        <name>3</name>
        <sequence type="described" ref="VSP_008022"/>
    </isoform>
</comment>
<sequence length="622" mass="72044">MNKLNFHNNRVMQDRRSVCIFLPNDESLNIIINVKILCHQLLVQVCDLLRLKDCHLFGLSVIQNNEHVYMELSQKLYKYCPKEWKKEASKVRQYEVTWGIDQFGPPMIIHFRVQYYVENGRLISDRAARYYYYWHLRKQVLHSQCVLREEAYFLLAAFALQADLGNFKRNKHYGKYFEPEAYFPSWVVSKRGKDYILKHIPNMHKDQFALTASEAHLKYIKEAVRLDDVAVHYYRLYKDKREIEASLTLGLTMRGIQIFQNLDEEKQLLYDFPWTNVGKLVFVGKKFEILPDGLPSARKLIYYTGCPMRSRHLLQLLSNSHRLYMNLQPVLRHIRKLEENEEKKQYRESYISDNLDLDMDQLEKRSRASGSSAGSMKHKRLSRHSTASHSSSHTSGIEADTKPRDTGPEDSYSSSAIHRKLKTCSSMTSHGSSHTSGVESGGKDRLEEDLQDDEIEMLVDDPRDLEQMNEESLEVSPDMCIYITEDMLMSRKLNGHSGLIVKEIGSSTSSSSETVVKLRGQSTDSLPQTICRKPKTSTDRHSLSLDDIRLYQKDFLRIAGLCQDTAQSYTFGCGHELDEEGLYCNSCLAQQCINIQDAFPVKRTSKYFSLDLTHDEVPEFVV</sequence>
<reference key="1">
    <citation type="journal article" date="2004" name="Nat. Genet.">
        <title>Complete sequencing and characterization of 21,243 full-length human cDNAs.</title>
        <authorList>
            <person name="Ota T."/>
            <person name="Suzuki Y."/>
            <person name="Nishikawa T."/>
            <person name="Otsuki T."/>
            <person name="Sugiyama T."/>
            <person name="Irie R."/>
            <person name="Wakamatsu A."/>
            <person name="Hayashi K."/>
            <person name="Sato H."/>
            <person name="Nagai K."/>
            <person name="Kimura K."/>
            <person name="Makita H."/>
            <person name="Sekine M."/>
            <person name="Obayashi M."/>
            <person name="Nishi T."/>
            <person name="Shibahara T."/>
            <person name="Tanaka T."/>
            <person name="Ishii S."/>
            <person name="Yamamoto J."/>
            <person name="Saito K."/>
            <person name="Kawai Y."/>
            <person name="Isono Y."/>
            <person name="Nakamura Y."/>
            <person name="Nagahari K."/>
            <person name="Murakami K."/>
            <person name="Yasuda T."/>
            <person name="Iwayanagi T."/>
            <person name="Wagatsuma M."/>
            <person name="Shiratori A."/>
            <person name="Sudo H."/>
            <person name="Hosoiri T."/>
            <person name="Kaku Y."/>
            <person name="Kodaira H."/>
            <person name="Kondo H."/>
            <person name="Sugawara M."/>
            <person name="Takahashi M."/>
            <person name="Kanda K."/>
            <person name="Yokoi T."/>
            <person name="Furuya T."/>
            <person name="Kikkawa E."/>
            <person name="Omura Y."/>
            <person name="Abe K."/>
            <person name="Kamihara K."/>
            <person name="Katsuta N."/>
            <person name="Sato K."/>
            <person name="Tanikawa M."/>
            <person name="Yamazaki M."/>
            <person name="Ninomiya K."/>
            <person name="Ishibashi T."/>
            <person name="Yamashita H."/>
            <person name="Murakawa K."/>
            <person name="Fujimori K."/>
            <person name="Tanai H."/>
            <person name="Kimata M."/>
            <person name="Watanabe M."/>
            <person name="Hiraoka S."/>
            <person name="Chiba Y."/>
            <person name="Ishida S."/>
            <person name="Ono Y."/>
            <person name="Takiguchi S."/>
            <person name="Watanabe S."/>
            <person name="Yosida M."/>
            <person name="Hotuta T."/>
            <person name="Kusano J."/>
            <person name="Kanehori K."/>
            <person name="Takahashi-Fujii A."/>
            <person name="Hara H."/>
            <person name="Tanase T.-O."/>
            <person name="Nomura Y."/>
            <person name="Togiya S."/>
            <person name="Komai F."/>
            <person name="Hara R."/>
            <person name="Takeuchi K."/>
            <person name="Arita M."/>
            <person name="Imose N."/>
            <person name="Musashino K."/>
            <person name="Yuuki H."/>
            <person name="Oshima A."/>
            <person name="Sasaki N."/>
            <person name="Aotsuka S."/>
            <person name="Yoshikawa Y."/>
            <person name="Matsunawa H."/>
            <person name="Ichihara T."/>
            <person name="Shiohata N."/>
            <person name="Sano S."/>
            <person name="Moriya S."/>
            <person name="Momiyama H."/>
            <person name="Satoh N."/>
            <person name="Takami S."/>
            <person name="Terashima Y."/>
            <person name="Suzuki O."/>
            <person name="Nakagawa S."/>
            <person name="Senoh A."/>
            <person name="Mizoguchi H."/>
            <person name="Goto Y."/>
            <person name="Shimizu F."/>
            <person name="Wakebe H."/>
            <person name="Hishigaki H."/>
            <person name="Watanabe T."/>
            <person name="Sugiyama A."/>
            <person name="Takemoto M."/>
            <person name="Kawakami B."/>
            <person name="Yamazaki M."/>
            <person name="Watanabe K."/>
            <person name="Kumagai A."/>
            <person name="Itakura S."/>
            <person name="Fukuzumi Y."/>
            <person name="Fujimori Y."/>
            <person name="Komiyama M."/>
            <person name="Tashiro H."/>
            <person name="Tanigami A."/>
            <person name="Fujiwara T."/>
            <person name="Ono T."/>
            <person name="Yamada K."/>
            <person name="Fujii Y."/>
            <person name="Ozaki K."/>
            <person name="Hirao M."/>
            <person name="Ohmori Y."/>
            <person name="Kawabata A."/>
            <person name="Hikiji T."/>
            <person name="Kobatake N."/>
            <person name="Inagaki H."/>
            <person name="Ikema Y."/>
            <person name="Okamoto S."/>
            <person name="Okitani R."/>
            <person name="Kawakami T."/>
            <person name="Noguchi S."/>
            <person name="Itoh T."/>
            <person name="Shigeta K."/>
            <person name="Senba T."/>
            <person name="Matsumura K."/>
            <person name="Nakajima Y."/>
            <person name="Mizuno T."/>
            <person name="Morinaga M."/>
            <person name="Sasaki M."/>
            <person name="Togashi T."/>
            <person name="Oyama M."/>
            <person name="Hata H."/>
            <person name="Watanabe M."/>
            <person name="Komatsu T."/>
            <person name="Mizushima-Sugano J."/>
            <person name="Satoh T."/>
            <person name="Shirai Y."/>
            <person name="Takahashi Y."/>
            <person name="Nakagawa K."/>
            <person name="Okumura K."/>
            <person name="Nagase T."/>
            <person name="Nomura N."/>
            <person name="Kikuchi H."/>
            <person name="Masuho Y."/>
            <person name="Yamashita R."/>
            <person name="Nakai K."/>
            <person name="Yada T."/>
            <person name="Nakamura Y."/>
            <person name="Ohara O."/>
            <person name="Isogai T."/>
            <person name="Sugano S."/>
        </authorList>
    </citation>
    <scope>NUCLEOTIDE SEQUENCE [LARGE SCALE MRNA] (ISOFORM 1)</scope>
    <source>
        <tissue>Hair follicle dermal papilla</tissue>
    </source>
</reference>
<reference key="2">
    <citation type="submission" date="2003-01" db="EMBL/GenBank/DDBJ databases">
        <title>Full-length cDNA libraries and normalization.</title>
        <authorList>
            <person name="Li W.B."/>
            <person name="Gruber C."/>
            <person name="Jessee J."/>
            <person name="Polayes D."/>
        </authorList>
    </citation>
    <scope>NUCLEOTIDE SEQUENCE [LARGE SCALE MRNA] (ISOFORM 2)</scope>
    <source>
        <tissue>Placenta</tissue>
    </source>
</reference>
<reference key="3">
    <citation type="journal article" date="2007" name="BMC Genomics">
        <title>The full-ORF clone resource of the German cDNA consortium.</title>
        <authorList>
            <person name="Bechtel S."/>
            <person name="Rosenfelder H."/>
            <person name="Duda A."/>
            <person name="Schmidt C.P."/>
            <person name="Ernst U."/>
            <person name="Wellenreuther R."/>
            <person name="Mehrle A."/>
            <person name="Schuster C."/>
            <person name="Bahr A."/>
            <person name="Bloecker H."/>
            <person name="Heubner D."/>
            <person name="Hoerlein A."/>
            <person name="Michel G."/>
            <person name="Wedler H."/>
            <person name="Koehrer K."/>
            <person name="Ottenwaelder B."/>
            <person name="Poustka A."/>
            <person name="Wiemann S."/>
            <person name="Schupp I."/>
        </authorList>
    </citation>
    <scope>NUCLEOTIDE SEQUENCE [LARGE SCALE MRNA] (ISOFORM 2)</scope>
    <source>
        <tissue>Fetal skin</tissue>
        <tissue>Uterus</tissue>
    </source>
</reference>
<reference key="4">
    <citation type="journal article" date="2003" name="Nature">
        <title>The DNA sequence and analysis of human chromosome 14.</title>
        <authorList>
            <person name="Heilig R."/>
            <person name="Eckenberg R."/>
            <person name="Petit J.-L."/>
            <person name="Fonknechten N."/>
            <person name="Da Silva C."/>
            <person name="Cattolico L."/>
            <person name="Levy M."/>
            <person name="Barbe V."/>
            <person name="De Berardinis V."/>
            <person name="Ureta-Vidal A."/>
            <person name="Pelletier E."/>
            <person name="Vico V."/>
            <person name="Anthouard V."/>
            <person name="Rowen L."/>
            <person name="Madan A."/>
            <person name="Qin S."/>
            <person name="Sun H."/>
            <person name="Du H."/>
            <person name="Pepin K."/>
            <person name="Artiguenave F."/>
            <person name="Robert C."/>
            <person name="Cruaud C."/>
            <person name="Bruels T."/>
            <person name="Jaillon O."/>
            <person name="Friedlander L."/>
            <person name="Samson G."/>
            <person name="Brottier P."/>
            <person name="Cure S."/>
            <person name="Segurens B."/>
            <person name="Aniere F."/>
            <person name="Samain S."/>
            <person name="Crespeau H."/>
            <person name="Abbasi N."/>
            <person name="Aiach N."/>
            <person name="Boscus D."/>
            <person name="Dickhoff R."/>
            <person name="Dors M."/>
            <person name="Dubois I."/>
            <person name="Friedman C."/>
            <person name="Gouyvenoux M."/>
            <person name="James R."/>
            <person name="Madan A."/>
            <person name="Mairey-Estrada B."/>
            <person name="Mangenot S."/>
            <person name="Martins N."/>
            <person name="Menard M."/>
            <person name="Oztas S."/>
            <person name="Ratcliffe A."/>
            <person name="Shaffer T."/>
            <person name="Trask B."/>
            <person name="Vacherie B."/>
            <person name="Bellemere C."/>
            <person name="Belser C."/>
            <person name="Besnard-Gonnet M."/>
            <person name="Bartol-Mavel D."/>
            <person name="Boutard M."/>
            <person name="Briez-Silla S."/>
            <person name="Combette S."/>
            <person name="Dufosse-Laurent V."/>
            <person name="Ferron C."/>
            <person name="Lechaplais C."/>
            <person name="Louesse C."/>
            <person name="Muselet D."/>
            <person name="Magdelenat G."/>
            <person name="Pateau E."/>
            <person name="Petit E."/>
            <person name="Sirvain-Trukniewicz P."/>
            <person name="Trybou A."/>
            <person name="Vega-Czarny N."/>
            <person name="Bataille E."/>
            <person name="Bluet E."/>
            <person name="Bordelais I."/>
            <person name="Dubois M."/>
            <person name="Dumont C."/>
            <person name="Guerin T."/>
            <person name="Haffray S."/>
            <person name="Hammadi R."/>
            <person name="Muanga J."/>
            <person name="Pellouin V."/>
            <person name="Robert D."/>
            <person name="Wunderle E."/>
            <person name="Gauguet G."/>
            <person name="Roy A."/>
            <person name="Sainte-Marthe L."/>
            <person name="Verdier J."/>
            <person name="Verdier-Discala C."/>
            <person name="Hillier L.W."/>
            <person name="Fulton L."/>
            <person name="McPherson J."/>
            <person name="Matsuda F."/>
            <person name="Wilson R."/>
            <person name="Scarpelli C."/>
            <person name="Gyapay G."/>
            <person name="Wincker P."/>
            <person name="Saurin W."/>
            <person name="Quetier F."/>
            <person name="Waterston R."/>
            <person name="Hood L."/>
            <person name="Weissenbach J."/>
        </authorList>
    </citation>
    <scope>NUCLEOTIDE SEQUENCE [LARGE SCALE GENOMIC DNA]</scope>
</reference>
<reference key="5">
    <citation type="submission" date="2005-09" db="EMBL/GenBank/DDBJ databases">
        <authorList>
            <person name="Mural R.J."/>
            <person name="Istrail S."/>
            <person name="Sutton G.G."/>
            <person name="Florea L."/>
            <person name="Halpern A.L."/>
            <person name="Mobarry C.M."/>
            <person name="Lippert R."/>
            <person name="Walenz B."/>
            <person name="Shatkay H."/>
            <person name="Dew I."/>
            <person name="Miller J.R."/>
            <person name="Flanigan M.J."/>
            <person name="Edwards N.J."/>
            <person name="Bolanos R."/>
            <person name="Fasulo D."/>
            <person name="Halldorsson B.V."/>
            <person name="Hannenhalli S."/>
            <person name="Turner R."/>
            <person name="Yooseph S."/>
            <person name="Lu F."/>
            <person name="Nusskern D.R."/>
            <person name="Shue B.C."/>
            <person name="Zheng X.H."/>
            <person name="Zhong F."/>
            <person name="Delcher A.L."/>
            <person name="Huson D.H."/>
            <person name="Kravitz S.A."/>
            <person name="Mouchard L."/>
            <person name="Reinert K."/>
            <person name="Remington K.A."/>
            <person name="Clark A.G."/>
            <person name="Waterman M.S."/>
            <person name="Eichler E.E."/>
            <person name="Adams M.D."/>
            <person name="Hunkapiller M.W."/>
            <person name="Myers E.W."/>
            <person name="Venter J.C."/>
        </authorList>
    </citation>
    <scope>NUCLEOTIDE SEQUENCE [LARGE SCALE GENOMIC DNA]</scope>
</reference>
<reference key="6">
    <citation type="journal article" date="2004" name="Genome Res.">
        <title>The status, quality, and expansion of the NIH full-length cDNA project: the Mammalian Gene Collection (MGC).</title>
        <authorList>
            <consortium name="The MGC Project Team"/>
        </authorList>
    </citation>
    <scope>NUCLEOTIDE SEQUENCE [LARGE SCALE MRNA] (ISOFORMS 2 AND 3)</scope>
    <source>
        <tissue>Brain</tissue>
        <tissue>Uterus</tissue>
    </source>
</reference>
<reference key="7">
    <citation type="journal article" date="2005" name="FEBS Lett.">
        <title>A novel 4.1 ezrin radixin moesin (FERM)-containing protein, 'Willin'.</title>
        <authorList>
            <person name="Gunn-Moore F.J."/>
            <person name="Welsh G.I."/>
            <person name="Herron L.R."/>
            <person name="Brannigan F."/>
            <person name="Venkateswarlu K."/>
            <person name="Gillespie S."/>
            <person name="Brandwein-Gensler M."/>
            <person name="Madan R."/>
            <person name="Tavare J.M."/>
            <person name="Brophy P.J."/>
            <person name="Prystowsky M.B."/>
            <person name="Guild S."/>
        </authorList>
    </citation>
    <scope>SUBCELLULAR LOCATION</scope>
</reference>
<reference key="8">
    <citation type="journal article" date="2008" name="Mol. Cell">
        <title>Kinase-selective enrichment enables quantitative phosphoproteomics of the kinome across the cell cycle.</title>
        <authorList>
            <person name="Daub H."/>
            <person name="Olsen J.V."/>
            <person name="Bairlein M."/>
            <person name="Gnad F."/>
            <person name="Oppermann F.S."/>
            <person name="Korner R."/>
            <person name="Greff Z."/>
            <person name="Keri G."/>
            <person name="Stemmann O."/>
            <person name="Mann M."/>
        </authorList>
    </citation>
    <scope>IDENTIFICATION BY MASS SPECTROMETRY [LARGE SCALE ANALYSIS]</scope>
    <source>
        <tissue>Cervix carcinoma</tissue>
    </source>
</reference>
<reference key="9">
    <citation type="journal article" date="2008" name="Proc. Natl. Acad. Sci. U.S.A.">
        <title>A quantitative atlas of mitotic phosphorylation.</title>
        <authorList>
            <person name="Dephoure N."/>
            <person name="Zhou C."/>
            <person name="Villen J."/>
            <person name="Beausoleil S.A."/>
            <person name="Bakalarski C.E."/>
            <person name="Elledge S.J."/>
            <person name="Gygi S.P."/>
        </authorList>
    </citation>
    <scope>PHOSPHORYLATION [LARGE SCALE ANALYSIS] AT SER-544</scope>
    <scope>IDENTIFICATION BY MASS SPECTROMETRY [LARGE SCALE ANALYSIS]</scope>
    <source>
        <tissue>Cervix carcinoma</tissue>
    </source>
</reference>
<reference key="10">
    <citation type="journal article" date="2013" name="J. Proteome Res.">
        <title>Toward a comprehensive characterization of a human cancer cell phosphoproteome.</title>
        <authorList>
            <person name="Zhou H."/>
            <person name="Di Palma S."/>
            <person name="Preisinger C."/>
            <person name="Peng M."/>
            <person name="Polat A.N."/>
            <person name="Heck A.J."/>
            <person name="Mohammed S."/>
        </authorList>
    </citation>
    <scope>PHOSPHORYLATION [LARGE SCALE ANALYSIS] AT SER-542 AND SER-544</scope>
    <scope>IDENTIFICATION BY MASS SPECTROMETRY [LARGE SCALE ANALYSIS]</scope>
    <source>
        <tissue>Cervix carcinoma</tissue>
    </source>
</reference>
<reference key="11">
    <citation type="journal article" date="2014" name="J. Proteomics">
        <title>An enzyme assisted RP-RPLC approach for in-depth analysis of human liver phosphoproteome.</title>
        <authorList>
            <person name="Bian Y."/>
            <person name="Song C."/>
            <person name="Cheng K."/>
            <person name="Dong M."/>
            <person name="Wang F."/>
            <person name="Huang J."/>
            <person name="Sun D."/>
            <person name="Wang L."/>
            <person name="Ye M."/>
            <person name="Zou H."/>
        </authorList>
    </citation>
    <scope>PHOSPHORYLATION [LARGE SCALE ANALYSIS] AT SER-542</scope>
    <scope>IDENTIFICATION BY MASS SPECTROMETRY [LARGE SCALE ANALYSIS]</scope>
    <source>
        <tissue>Liver</tissue>
    </source>
</reference>
<accession>Q96NE9</accession>
<accession>D3DSB9</accession>
<accession>Q5HYF2</accession>
<accession>Q8N2X1</accession>
<accession>Q8WUH7</accession>
<proteinExistence type="evidence at protein level"/>
<keyword id="KW-0025">Alternative splicing</keyword>
<keyword id="KW-1003">Cell membrane</keyword>
<keyword id="KW-0963">Cytoplasm</keyword>
<keyword id="KW-0472">Membrane</keyword>
<keyword id="KW-0597">Phosphoprotein</keyword>
<keyword id="KW-1267">Proteomics identification</keyword>
<keyword id="KW-1185">Reference proteome</keyword>
<feature type="chain" id="PRO_0000219448" description="FERM domain-containing protein 6">
    <location>
        <begin position="1"/>
        <end position="622"/>
    </location>
</feature>
<feature type="domain" description="FERM" evidence="2">
    <location>
        <begin position="16"/>
        <end position="328"/>
    </location>
</feature>
<feature type="region of interest" description="Disordered" evidence="3">
    <location>
        <begin position="364"/>
        <end position="445"/>
    </location>
</feature>
<feature type="compositionally biased region" description="Low complexity" evidence="3">
    <location>
        <begin position="384"/>
        <end position="395"/>
    </location>
</feature>
<feature type="compositionally biased region" description="Low complexity" evidence="3">
    <location>
        <begin position="425"/>
        <end position="438"/>
    </location>
</feature>
<feature type="modified residue" description="Phosphoserine" evidence="1">
    <location>
        <position position="522"/>
    </location>
</feature>
<feature type="modified residue" description="Phosphothreonine" evidence="1">
    <location>
        <position position="523"/>
    </location>
</feature>
<feature type="modified residue" description="Phosphoserine" evidence="1">
    <location>
        <position position="525"/>
    </location>
</feature>
<feature type="modified residue" description="Phosphoserine" evidence="10 11">
    <location>
        <position position="542"/>
    </location>
</feature>
<feature type="modified residue" description="Phosphoserine" evidence="9 10">
    <location>
        <position position="544"/>
    </location>
</feature>
<feature type="splice variant" id="VSP_008022" description="In isoform 3." evidence="5">
    <location>
        <begin position="1"/>
        <end position="358"/>
    </location>
</feature>
<feature type="splice variant" id="VSP_008023" description="In isoform 2." evidence="5 6 7">
    <location>
        <begin position="91"/>
        <end position="98"/>
    </location>
</feature>
<feature type="sequence conflict" description="In Ref. 3; CAI46062." evidence="8" ref="3">
    <original>K</original>
    <variation>E</variation>
    <location>
        <position position="52"/>
    </location>
</feature>
<feature type="sequence conflict" description="In Ref. 3; CAI46062." evidence="8" ref="3">
    <original>H</original>
    <variation>Y</variation>
    <location>
        <position position="67"/>
    </location>
</feature>
<protein>
    <recommendedName>
        <fullName>FERM domain-containing protein 6</fullName>
    </recommendedName>
    <alternativeName>
        <fullName>Willin</fullName>
    </alternativeName>
</protein>